<keyword id="KW-0067">ATP-binding</keyword>
<keyword id="KW-1003">Cell membrane</keyword>
<keyword id="KW-0967">Endosome</keyword>
<keyword id="KW-0325">Glycoprotein</keyword>
<keyword id="KW-0472">Membrane</keyword>
<keyword id="KW-0547">Nucleotide-binding</keyword>
<keyword id="KW-0597">Phosphoprotein</keyword>
<keyword id="KW-1185">Reference proteome</keyword>
<keyword id="KW-0677">Repeat</keyword>
<keyword id="KW-1278">Translocase</keyword>
<keyword id="KW-0812">Transmembrane</keyword>
<keyword id="KW-1133">Transmembrane helix</keyword>
<keyword id="KW-0813">Transport</keyword>
<keyword id="KW-0832">Ubl conjugation</keyword>
<proteinExistence type="evidence at protein level"/>
<feature type="chain" id="PRO_0000451041" description="Bile salt export pump">
    <location>
        <begin position="1"/>
        <end position="1325"/>
    </location>
</feature>
<feature type="topological domain" description="Cytoplasmic" evidence="9">
    <location>
        <begin position="1"/>
        <end position="62"/>
    </location>
</feature>
<feature type="transmembrane region" description="Helical" evidence="3 5">
    <location>
        <begin position="63"/>
        <end position="83"/>
    </location>
</feature>
<feature type="topological domain" description="Extracellular" evidence="9">
    <location>
        <begin position="84"/>
        <end position="147"/>
    </location>
</feature>
<feature type="transmembrane region" description="Helical" evidence="3 5">
    <location>
        <begin position="148"/>
        <end position="168"/>
    </location>
</feature>
<feature type="topological domain" description="Cytoplasmic" evidence="9">
    <location>
        <begin position="169"/>
        <end position="240"/>
    </location>
</feature>
<feature type="transmembrane region" description="Helical" evidence="3 5">
    <location>
        <begin position="241"/>
        <end position="261"/>
    </location>
</feature>
<feature type="topological domain" description="Extracellular" evidence="9">
    <location>
        <begin position="262"/>
        <end position="319"/>
    </location>
</feature>
<feature type="transmembrane region" description="Helical" evidence="3 5">
    <location>
        <begin position="320"/>
        <end position="340"/>
    </location>
</feature>
<feature type="topological domain" description="Cytoplasmic" evidence="9">
    <location>
        <begin position="341"/>
        <end position="353"/>
    </location>
</feature>
<feature type="transmembrane region" description="Helical" evidence="3 5">
    <location>
        <begin position="354"/>
        <end position="374"/>
    </location>
</feature>
<feature type="topological domain" description="Extracellular" evidence="9">
    <location>
        <begin position="375"/>
        <end position="759"/>
    </location>
</feature>
<feature type="transmembrane region" description="Helical" evidence="3 5">
    <location>
        <begin position="760"/>
        <end position="780"/>
    </location>
</feature>
<feature type="topological domain" description="Cytoplasmic" evidence="9">
    <location>
        <begin position="781"/>
        <end position="798"/>
    </location>
</feature>
<feature type="transmembrane region" description="Helical" evidence="3 5">
    <location>
        <begin position="799"/>
        <end position="819"/>
    </location>
</feature>
<feature type="topological domain" description="Extracellular" evidence="9">
    <location>
        <begin position="820"/>
        <end position="894"/>
    </location>
</feature>
<feature type="transmembrane region" description="Helical" evidence="3 5">
    <location>
        <begin position="895"/>
        <end position="915"/>
    </location>
</feature>
<feature type="topological domain" description="Cytoplasmic" evidence="9">
    <location>
        <begin position="916"/>
        <end position="983"/>
    </location>
</feature>
<feature type="transmembrane region" description="Helical" evidence="3 5">
    <location>
        <begin position="984"/>
        <end position="1004"/>
    </location>
</feature>
<feature type="topological domain" description="Extracellular" evidence="9">
    <location>
        <begin position="1005"/>
        <end position="1014"/>
    </location>
</feature>
<feature type="transmembrane region" description="Helical" evidence="3 5">
    <location>
        <begin position="1015"/>
        <end position="1035"/>
    </location>
</feature>
<feature type="topological domain" description="Cytoplasmic" evidence="9">
    <location>
        <begin position="1036"/>
        <end position="1325"/>
    </location>
</feature>
<feature type="domain" description="ABC transmembrane type-1 1" evidence="5">
    <location>
        <begin position="62"/>
        <end position="385"/>
    </location>
</feature>
<feature type="domain" description="ABC transporter 1" evidence="4">
    <location>
        <begin position="420"/>
        <end position="656"/>
    </location>
</feature>
<feature type="domain" description="ABC transmembrane type-1 2" evidence="5">
    <location>
        <begin position="759"/>
        <end position="1047"/>
    </location>
</feature>
<feature type="domain" description="ABC transporter 2" evidence="4">
    <location>
        <begin position="1082"/>
        <end position="1320"/>
    </location>
</feature>
<feature type="binding site" evidence="4">
    <location>
        <begin position="455"/>
        <end position="462"/>
    </location>
    <ligand>
        <name>ATP</name>
        <dbReference type="ChEBI" id="CHEBI:30616"/>
    </ligand>
</feature>
<feature type="binding site" evidence="4">
    <location>
        <begin position="1117"/>
        <end position="1124"/>
    </location>
    <ligand>
        <name>ATP</name>
        <dbReference type="ChEBI" id="CHEBI:30616"/>
    </ligand>
</feature>
<feature type="glycosylation site" description="N-linked (GlcNAc...) asparagine" evidence="6">
    <location>
        <position position="109"/>
    </location>
</feature>
<feature type="glycosylation site" description="N-linked (GlcNAc...) asparagine" evidence="6">
    <location>
        <position position="116"/>
    </location>
</feature>
<feature type="glycosylation site" description="N-linked (GlcNAc...) asparagine" evidence="6">
    <location>
        <position position="122"/>
    </location>
</feature>
<feature type="glycosylation site" description="N-linked (GlcNAc...) asparagine" evidence="6">
    <location>
        <position position="125"/>
    </location>
</feature>
<feature type="glycosylation site" description="N-linked (GlcNAc...) asparagine" evidence="6">
    <location>
        <position position="375"/>
    </location>
</feature>
<feature type="glycosylation site" description="N-linked (GlcNAc...) asparagine" evidence="6">
    <location>
        <position position="424"/>
    </location>
</feature>
<feature type="glycosylation site" description="N-linked (GlcNAc...) asparagine" evidence="6">
    <location>
        <position position="440"/>
    </location>
</feature>
<feature type="glycosylation site" description="N-linked (GlcNAc...) asparagine" evidence="6">
    <location>
        <position position="591"/>
    </location>
</feature>
<feature type="glycosylation site" description="N-linked (GlcNAc...) asparagine" evidence="6">
    <location>
        <position position="889"/>
    </location>
</feature>
<dbReference type="EC" id="7.6.2.-" evidence="7"/>
<dbReference type="EMBL" id="DQ157431">
    <property type="protein sequence ID" value="ABA39075.1"/>
    <property type="molecule type" value="mRNA"/>
</dbReference>
<dbReference type="RefSeq" id="NP_001137404.1">
    <property type="nucleotide sequence ID" value="NM_001143932.1"/>
</dbReference>
<dbReference type="SMR" id="B8K1W2"/>
<dbReference type="FunCoup" id="B8K1W2">
    <property type="interactions" value="43"/>
</dbReference>
<dbReference type="GlyCosmos" id="B8K1W2">
    <property type="glycosylation" value="9 sites, No reported glycans"/>
</dbReference>
<dbReference type="Ensembl" id="ENSCAFT00030042019.1">
    <property type="protein sequence ID" value="ENSCAFP00030036654.1"/>
    <property type="gene ID" value="ENSCAFG00030022858.1"/>
</dbReference>
<dbReference type="Ensembl" id="ENSCAFT00845036706.1">
    <property type="protein sequence ID" value="ENSCAFP00845028736.1"/>
    <property type="gene ID" value="ENSCAFG00845020713.1"/>
</dbReference>
<dbReference type="GeneID" id="488390"/>
<dbReference type="KEGG" id="cfa:488390"/>
<dbReference type="CTD" id="8647"/>
<dbReference type="VEuPathDB" id="HostDB:ENSCAFG00845020713"/>
<dbReference type="GeneTree" id="ENSGT00940000157564"/>
<dbReference type="InParanoid" id="B8K1W2"/>
<dbReference type="OrthoDB" id="6500128at2759"/>
<dbReference type="Reactome" id="R-CFA-159418">
    <property type="pathway name" value="Recycling of bile acids and salts"/>
</dbReference>
<dbReference type="Reactome" id="R-CFA-193368">
    <property type="pathway name" value="Synthesis of bile acids and bile salts via 7alpha-hydroxycholesterol"/>
</dbReference>
<dbReference type="Proteomes" id="UP000002254">
    <property type="component" value="Unplaced"/>
</dbReference>
<dbReference type="Proteomes" id="UP000694429">
    <property type="component" value="Chromosome 36"/>
</dbReference>
<dbReference type="Proteomes" id="UP000694542">
    <property type="component" value="Unplaced"/>
</dbReference>
<dbReference type="Proteomes" id="UP000805418">
    <property type="component" value="Chromosome 36"/>
</dbReference>
<dbReference type="GO" id="GO:0016324">
    <property type="term" value="C:apical plasma membrane"/>
    <property type="evidence" value="ECO:0000250"/>
    <property type="project" value="UniProtKB"/>
</dbReference>
<dbReference type="GO" id="GO:0009986">
    <property type="term" value="C:cell surface"/>
    <property type="evidence" value="ECO:0007669"/>
    <property type="project" value="Ensembl"/>
</dbReference>
<dbReference type="GO" id="GO:0005768">
    <property type="term" value="C:endosome"/>
    <property type="evidence" value="ECO:0000250"/>
    <property type="project" value="UniProtKB"/>
</dbReference>
<dbReference type="GO" id="GO:0046581">
    <property type="term" value="C:intercellular canaliculus"/>
    <property type="evidence" value="ECO:0007669"/>
    <property type="project" value="Ensembl"/>
</dbReference>
<dbReference type="GO" id="GO:0046691">
    <property type="term" value="C:intracellular canaliculus"/>
    <property type="evidence" value="ECO:0000250"/>
    <property type="project" value="UniProtKB"/>
</dbReference>
<dbReference type="GO" id="GO:0005886">
    <property type="term" value="C:plasma membrane"/>
    <property type="evidence" value="ECO:0000315"/>
    <property type="project" value="UniProtKB"/>
</dbReference>
<dbReference type="GO" id="GO:0055037">
    <property type="term" value="C:recycling endosome"/>
    <property type="evidence" value="ECO:0000250"/>
    <property type="project" value="UniProtKB"/>
</dbReference>
<dbReference type="GO" id="GO:0055038">
    <property type="term" value="C:recycling endosome membrane"/>
    <property type="evidence" value="ECO:0007669"/>
    <property type="project" value="UniProtKB-SubCell"/>
</dbReference>
<dbReference type="GO" id="GO:0015432">
    <property type="term" value="F:ABC-type bile acid transporter activity"/>
    <property type="evidence" value="ECO:0000314"/>
    <property type="project" value="UniProtKB"/>
</dbReference>
<dbReference type="GO" id="GO:0008559">
    <property type="term" value="F:ABC-type xenobiotic transporter activity"/>
    <property type="evidence" value="ECO:0000250"/>
    <property type="project" value="UniProtKB"/>
</dbReference>
<dbReference type="GO" id="GO:0005524">
    <property type="term" value="F:ATP binding"/>
    <property type="evidence" value="ECO:0007669"/>
    <property type="project" value="UniProtKB-KW"/>
</dbReference>
<dbReference type="GO" id="GO:0016887">
    <property type="term" value="F:ATP hydrolysis activity"/>
    <property type="evidence" value="ECO:0007669"/>
    <property type="project" value="InterPro"/>
</dbReference>
<dbReference type="GO" id="GO:0015125">
    <property type="term" value="F:bile acid transmembrane transporter activity"/>
    <property type="evidence" value="ECO:0000315"/>
    <property type="project" value="UniProtKB"/>
</dbReference>
<dbReference type="GO" id="GO:0015126">
    <property type="term" value="F:canalicular bile acid transmembrane transporter activity"/>
    <property type="evidence" value="ECO:0000250"/>
    <property type="project" value="UniProtKB"/>
</dbReference>
<dbReference type="GO" id="GO:0015721">
    <property type="term" value="P:bile acid and bile salt transport"/>
    <property type="evidence" value="ECO:0000314"/>
    <property type="project" value="UniProtKB"/>
</dbReference>
<dbReference type="GO" id="GO:0008206">
    <property type="term" value="P:bile acid metabolic process"/>
    <property type="evidence" value="ECO:0000250"/>
    <property type="project" value="UniProtKB"/>
</dbReference>
<dbReference type="GO" id="GO:0015722">
    <property type="term" value="P:canalicular bile acid transport"/>
    <property type="evidence" value="ECO:0000315"/>
    <property type="project" value="UniProtKB"/>
</dbReference>
<dbReference type="GO" id="GO:0042632">
    <property type="term" value="P:cholesterol homeostasis"/>
    <property type="evidence" value="ECO:0007669"/>
    <property type="project" value="Ensembl"/>
</dbReference>
<dbReference type="GO" id="GO:0006631">
    <property type="term" value="P:fatty acid metabolic process"/>
    <property type="evidence" value="ECO:0007669"/>
    <property type="project" value="Ensembl"/>
</dbReference>
<dbReference type="GO" id="GO:0055091">
    <property type="term" value="P:phospholipid homeostasis"/>
    <property type="evidence" value="ECO:0007669"/>
    <property type="project" value="Ensembl"/>
</dbReference>
<dbReference type="GO" id="GO:0120189">
    <property type="term" value="P:positive regulation of bile acid secretion"/>
    <property type="evidence" value="ECO:0007669"/>
    <property type="project" value="Ensembl"/>
</dbReference>
<dbReference type="GO" id="GO:0016567">
    <property type="term" value="P:protein ubiquitination"/>
    <property type="evidence" value="ECO:0007669"/>
    <property type="project" value="Ensembl"/>
</dbReference>
<dbReference type="GO" id="GO:1904251">
    <property type="term" value="P:regulation of bile acid metabolic process"/>
    <property type="evidence" value="ECO:0007669"/>
    <property type="project" value="Ensembl"/>
</dbReference>
<dbReference type="GO" id="GO:0031998">
    <property type="term" value="P:regulation of fatty acid beta-oxidation"/>
    <property type="evidence" value="ECO:0007669"/>
    <property type="project" value="Ensembl"/>
</dbReference>
<dbReference type="GO" id="GO:0055085">
    <property type="term" value="P:transmembrane transport"/>
    <property type="evidence" value="ECO:0000318"/>
    <property type="project" value="GO_Central"/>
</dbReference>
<dbReference type="GO" id="GO:0046618">
    <property type="term" value="P:xenobiotic export from cell"/>
    <property type="evidence" value="ECO:0000250"/>
    <property type="project" value="UniProtKB"/>
</dbReference>
<dbReference type="GO" id="GO:0006805">
    <property type="term" value="P:xenobiotic metabolic process"/>
    <property type="evidence" value="ECO:0000250"/>
    <property type="project" value="UniProtKB"/>
</dbReference>
<dbReference type="GO" id="GO:0006855">
    <property type="term" value="P:xenobiotic transmembrane transport"/>
    <property type="evidence" value="ECO:0000250"/>
    <property type="project" value="UniProtKB"/>
</dbReference>
<dbReference type="CDD" id="cd18577">
    <property type="entry name" value="ABC_6TM_Pgp_ABCB1_D1_like"/>
    <property type="match status" value="1"/>
</dbReference>
<dbReference type="CDD" id="cd18578">
    <property type="entry name" value="ABC_6TM_Pgp_ABCB1_D2_like"/>
    <property type="match status" value="1"/>
</dbReference>
<dbReference type="CDD" id="cd03249">
    <property type="entry name" value="ABC_MTABC3_MDL1_MDL2"/>
    <property type="match status" value="2"/>
</dbReference>
<dbReference type="FunFam" id="1.20.1560.10:FF:000018">
    <property type="entry name" value="ATP-binding cassette subfamily B member 11"/>
    <property type="match status" value="1"/>
</dbReference>
<dbReference type="FunFam" id="1.20.1560.10:FF:000046">
    <property type="entry name" value="ATP-binding cassette subfamily B member 11"/>
    <property type="match status" value="1"/>
</dbReference>
<dbReference type="FunFam" id="1.20.1560.10:FF:000051">
    <property type="entry name" value="ATP-binding cassette subfamily B member 11"/>
    <property type="match status" value="1"/>
</dbReference>
<dbReference type="FunFam" id="3.40.50.300:FF:000479">
    <property type="entry name" value="Multidrug resistance protein 1A"/>
    <property type="match status" value="2"/>
</dbReference>
<dbReference type="Gene3D" id="1.20.1560.10">
    <property type="entry name" value="ABC transporter type 1, transmembrane domain"/>
    <property type="match status" value="1"/>
</dbReference>
<dbReference type="Gene3D" id="3.40.50.300">
    <property type="entry name" value="P-loop containing nucleotide triphosphate hydrolases"/>
    <property type="match status" value="2"/>
</dbReference>
<dbReference type="InterPro" id="IPR003593">
    <property type="entry name" value="AAA+_ATPase"/>
</dbReference>
<dbReference type="InterPro" id="IPR011527">
    <property type="entry name" value="ABC1_TM_dom"/>
</dbReference>
<dbReference type="InterPro" id="IPR036640">
    <property type="entry name" value="ABC1_TM_sf"/>
</dbReference>
<dbReference type="InterPro" id="IPR003439">
    <property type="entry name" value="ABC_transporter-like_ATP-bd"/>
</dbReference>
<dbReference type="InterPro" id="IPR017871">
    <property type="entry name" value="ABC_transporter-like_CS"/>
</dbReference>
<dbReference type="InterPro" id="IPR027417">
    <property type="entry name" value="P-loop_NTPase"/>
</dbReference>
<dbReference type="InterPro" id="IPR039421">
    <property type="entry name" value="Type_1_exporter"/>
</dbReference>
<dbReference type="PANTHER" id="PTHR43394:SF23">
    <property type="entry name" value="ATP-BINDING CASSETTE SUBFAMILY B MEMBER 11, GENE 2"/>
    <property type="match status" value="1"/>
</dbReference>
<dbReference type="PANTHER" id="PTHR43394">
    <property type="entry name" value="ATP-DEPENDENT PERMEASE MDL1, MITOCHONDRIAL"/>
    <property type="match status" value="1"/>
</dbReference>
<dbReference type="Pfam" id="PF00664">
    <property type="entry name" value="ABC_membrane"/>
    <property type="match status" value="2"/>
</dbReference>
<dbReference type="Pfam" id="PF00005">
    <property type="entry name" value="ABC_tran"/>
    <property type="match status" value="2"/>
</dbReference>
<dbReference type="SMART" id="SM00382">
    <property type="entry name" value="AAA"/>
    <property type="match status" value="2"/>
</dbReference>
<dbReference type="SUPFAM" id="SSF90123">
    <property type="entry name" value="ABC transporter transmembrane region"/>
    <property type="match status" value="2"/>
</dbReference>
<dbReference type="SUPFAM" id="SSF52540">
    <property type="entry name" value="P-loop containing nucleoside triphosphate hydrolases"/>
    <property type="match status" value="2"/>
</dbReference>
<dbReference type="PROSITE" id="PS50929">
    <property type="entry name" value="ABC_TM1F"/>
    <property type="match status" value="2"/>
</dbReference>
<dbReference type="PROSITE" id="PS00211">
    <property type="entry name" value="ABC_TRANSPORTER_1"/>
    <property type="match status" value="1"/>
</dbReference>
<dbReference type="PROSITE" id="PS50893">
    <property type="entry name" value="ABC_TRANSPORTER_2"/>
    <property type="match status" value="2"/>
</dbReference>
<protein>
    <recommendedName>
        <fullName evidence="8">Bile salt export pump</fullName>
        <ecNumber evidence="7">7.6.2.-</ecNumber>
    </recommendedName>
</protein>
<reference key="1">
    <citation type="journal article" date="2008" name="Biopharm. Drug Dispos.">
        <title>Cloning of the dog bile salt export pump (BSEP; ABCB11) and functional comparison with the human and rat proteins.</title>
        <authorList>
            <person name="Yabuuchi H."/>
            <person name="Tanaka K."/>
            <person name="Maeda M."/>
            <person name="Takemura M."/>
            <person name="Oka M."/>
            <person name="Ohashi R."/>
            <person name="Tamai I."/>
        </authorList>
    </citation>
    <scope>NUCLEOTIDE SEQUENCE [MRNA]</scope>
    <scope>TISSUE SPECIFICITY</scope>
    <scope>CATALYTIC ACTIVITY</scope>
    <scope>FUNCTION</scope>
    <scope>ACTIVITY REGULATION</scope>
    <scope>BIOPHYSICOCHEMICAL PROPERTIES</scope>
    <source>
        <tissue>Liver</tissue>
    </source>
</reference>
<evidence type="ECO:0000250" key="1">
    <source>
        <dbReference type="UniProtKB" id="O70127"/>
    </source>
</evidence>
<evidence type="ECO:0000250" key="2">
    <source>
        <dbReference type="UniProtKB" id="O95342"/>
    </source>
</evidence>
<evidence type="ECO:0000255" key="3"/>
<evidence type="ECO:0000255" key="4">
    <source>
        <dbReference type="PROSITE-ProRule" id="PRU00434"/>
    </source>
</evidence>
<evidence type="ECO:0000255" key="5">
    <source>
        <dbReference type="PROSITE-ProRule" id="PRU00441"/>
    </source>
</evidence>
<evidence type="ECO:0000255" key="6">
    <source>
        <dbReference type="PROSITE-ProRule" id="PRU00498"/>
    </source>
</evidence>
<evidence type="ECO:0000269" key="7">
    <source>
    </source>
</evidence>
<evidence type="ECO:0000303" key="8">
    <source>
    </source>
</evidence>
<evidence type="ECO:0000305" key="9"/>
<evidence type="ECO:0000305" key="10">
    <source>
    </source>
</evidence>
<sequence>MSDAVILRSVKKFGEDNYGFESSTFYNNDKNSGLQDERKGDSSQVGFFQLFRFSSTTDIWLMFVGSLCAFLHGLSHPGVLLIFGTMTDVFIAYDTELQELKIPGKACVNNTIVWINSSLNQNVTNGTQCGLLDIESEMIKFASYYAGIALLVLITGYIQICFWVIAAARQIQKMRKISFRKVMRMEIGWFDCNSVGELNTRFSDDINRVNDAIADQMPIFIQRMTTSICGFLLGFYQGWKLTLVIISVSPLIGIGAAIIGLSVSKFTDYELKAYAKAGSVADEVISSMRTVAAFGGEKKEVERYEKNLVFAQRWGIRKGIVMGFFTGFMWCLIFLCYALAFWYGSKLVLEDGEYTAGTLVQIFLSILLGALNLGNASSCLEAFATGRAAATSIFHTIDRKPIIDCMSEDGYKLDRIKGEIEFHNVTFHYPSRPEVKILNNLSMVIKSGEMTAVVGSSGSGKSTALQLIQRFYDPSEGMVTLDGHDIRSLNIQWLRTQIGIVEQEPVLFSTTIAENIRYGREDATMEDIVRAAKAANAYNFIMDLPEQFDTLVGEGGGQMSGGQKQRVAIARALVRNPKILLLDMATSALDNESEAMVQEALSKIQQGHTIISVAHRLSTVRAADVIIGFEHGTAVERGSHEELLERKGVYFTLVTLQSQGEPTANAEGIRGEEETDGVSLDNEQTFCRGSYQSSLRASLRQRSKSQLSYLAHEPPLAVVDHKSTYEEDRKDKDIPVEEEIEPAPVRRILKFNAPEWPYMLFGAVGAAVNGSVTPLYAFLFSQILGTFSLPDKEEQRSQINGVCLLFVAVGCVSLCTQFLQGYAFAKSGELLTKRLRKYGFRAMLGQDIGWFDDLRNSPGALTTRLATDASQVQGAAGSQIGMMVNSFTNVTVAMIIAFFFSWKLSLVIMCFFPFLALSGALQTRMLTGFATQDKEALEIAGQITNEALSNIRTVAGIGKERQFIEAFEAELEKPFKTAFRKANVYGFCFGFSQCIVFVANSASYRYGGYLIPNEGLHFSYVFRVISSVVLSATALGRASSYTPSYAKAKISAARFFQLLDRQPPIKVYSSAGEKWDNFQGQVDFVDCKFTYPSRPDTQVLNGLSVSVRPGQTLAFVGSSGCGKSTSIQLLERFYDPDQGKVMIDGHDSRKVNVQFLRSNIGIVSQEPVLFACSIMDNIKYGDNTREIPMEKVIEAAKQAQLHDFVMSLPEKYETNVGSQGSQLSRGEKQRIAIARAIVRNPKILLLDEATSALDTESEKTVQVALDKAREGRTCIVIAHRLSTIQNSDIIAVMSQGIVIEKGTHEELMAQKGAYYKLVTTGAPIS</sequence>
<comment type="function">
    <text evidence="2 7">Catalyzes the transport of the major hydrophobic bile salts, such as taurine and glycine-conjugated cholic acid across the canalicular membrane of hepatocytes in an ATP-dependent manner, therefore participates in hepatic bile acid homeostasis and consequently to lipid homeostasis through regulation of biliary lipid secretion in a bile salts dependent manner (PubMed:18985798). Transports taurine-conjugated bile salts more rapidly than glycine-conjugated bile salts. Also transports non-bile acid compounds, such as pravastatin and fexofenadine in an ATP-dependent manner and may be involved in their biliary excretion (By similarity).</text>
</comment>
<comment type="catalytic activity">
    <reaction evidence="2">
        <text>cholate(in) + ATP + H2O = cholate(out) + ADP + phosphate + H(+)</text>
        <dbReference type="Rhea" id="RHEA:50048"/>
        <dbReference type="ChEBI" id="CHEBI:15377"/>
        <dbReference type="ChEBI" id="CHEBI:15378"/>
        <dbReference type="ChEBI" id="CHEBI:29747"/>
        <dbReference type="ChEBI" id="CHEBI:30616"/>
        <dbReference type="ChEBI" id="CHEBI:43474"/>
        <dbReference type="ChEBI" id="CHEBI:456216"/>
    </reaction>
    <physiologicalReaction direction="left-to-right" evidence="2">
        <dbReference type="Rhea" id="RHEA:50049"/>
    </physiologicalReaction>
</comment>
<comment type="catalytic activity">
    <reaction evidence="7">
        <text>taurocholate(in) + ATP + H2O = taurocholate(out) + ADP + phosphate + H(+)</text>
        <dbReference type="Rhea" id="RHEA:50052"/>
        <dbReference type="ChEBI" id="CHEBI:15377"/>
        <dbReference type="ChEBI" id="CHEBI:15378"/>
        <dbReference type="ChEBI" id="CHEBI:30616"/>
        <dbReference type="ChEBI" id="CHEBI:36257"/>
        <dbReference type="ChEBI" id="CHEBI:43474"/>
        <dbReference type="ChEBI" id="CHEBI:456216"/>
    </reaction>
    <physiologicalReaction direction="left-to-right" evidence="10">
        <dbReference type="Rhea" id="RHEA:50053"/>
    </physiologicalReaction>
</comment>
<comment type="catalytic activity">
    <reaction evidence="2">
        <text>glycocholate(in) + ATP + H2O = glycocholate(out) + ADP + phosphate + H(+)</text>
        <dbReference type="Rhea" id="RHEA:50056"/>
        <dbReference type="ChEBI" id="CHEBI:15377"/>
        <dbReference type="ChEBI" id="CHEBI:15378"/>
        <dbReference type="ChEBI" id="CHEBI:29746"/>
        <dbReference type="ChEBI" id="CHEBI:30616"/>
        <dbReference type="ChEBI" id="CHEBI:43474"/>
        <dbReference type="ChEBI" id="CHEBI:456216"/>
    </reaction>
    <physiologicalReaction direction="left-to-right" evidence="2">
        <dbReference type="Rhea" id="RHEA:50057"/>
    </physiologicalReaction>
</comment>
<comment type="catalytic activity">
    <reaction evidence="2">
        <text>glycochenodeoxycholate(in) + ATP + H2O = glycochenodeoxycholate(out) + ADP + phosphate + H(+)</text>
        <dbReference type="Rhea" id="RHEA:50060"/>
        <dbReference type="ChEBI" id="CHEBI:15377"/>
        <dbReference type="ChEBI" id="CHEBI:15378"/>
        <dbReference type="ChEBI" id="CHEBI:30616"/>
        <dbReference type="ChEBI" id="CHEBI:36252"/>
        <dbReference type="ChEBI" id="CHEBI:43474"/>
        <dbReference type="ChEBI" id="CHEBI:456216"/>
    </reaction>
    <physiologicalReaction direction="left-to-right" evidence="2">
        <dbReference type="Rhea" id="RHEA:50061"/>
    </physiologicalReaction>
</comment>
<comment type="catalytic activity">
    <reaction evidence="2">
        <text>taurochenodeoxycholate(in) + ATP + H2O = taurochenodeoxycholate(out) + ADP + phosphate + H(+)</text>
        <dbReference type="Rhea" id="RHEA:50064"/>
        <dbReference type="ChEBI" id="CHEBI:9407"/>
        <dbReference type="ChEBI" id="CHEBI:15377"/>
        <dbReference type="ChEBI" id="CHEBI:15378"/>
        <dbReference type="ChEBI" id="CHEBI:30616"/>
        <dbReference type="ChEBI" id="CHEBI:43474"/>
        <dbReference type="ChEBI" id="CHEBI:456216"/>
    </reaction>
    <physiologicalReaction direction="left-to-right" evidence="2">
        <dbReference type="Rhea" id="RHEA:50065"/>
    </physiologicalReaction>
</comment>
<comment type="catalytic activity">
    <reaction evidence="2">
        <text>glycoursodeoxycholate(in) + ATP + H2O = glycoursodeoxycholate(out) + ADP + phosphate + H(+)</text>
        <dbReference type="Rhea" id="RHEA:50068"/>
        <dbReference type="ChEBI" id="CHEBI:15377"/>
        <dbReference type="ChEBI" id="CHEBI:15378"/>
        <dbReference type="ChEBI" id="CHEBI:30616"/>
        <dbReference type="ChEBI" id="CHEBI:43474"/>
        <dbReference type="ChEBI" id="CHEBI:132030"/>
        <dbReference type="ChEBI" id="CHEBI:456216"/>
    </reaction>
    <physiologicalReaction direction="left-to-right" evidence="2">
        <dbReference type="Rhea" id="RHEA:50069"/>
    </physiologicalReaction>
</comment>
<comment type="catalytic activity">
    <reaction evidence="2">
        <text>tauroursodeoxycholate(in) + ATP + H2O = tauroursodeoxycholate(out) + ADP + phosphate + H(+)</text>
        <dbReference type="Rhea" id="RHEA:50072"/>
        <dbReference type="ChEBI" id="CHEBI:15377"/>
        <dbReference type="ChEBI" id="CHEBI:15378"/>
        <dbReference type="ChEBI" id="CHEBI:30616"/>
        <dbReference type="ChEBI" id="CHEBI:43474"/>
        <dbReference type="ChEBI" id="CHEBI:132028"/>
        <dbReference type="ChEBI" id="CHEBI:456216"/>
    </reaction>
    <physiologicalReaction direction="left-to-right" evidence="2">
        <dbReference type="Rhea" id="RHEA:50073"/>
    </physiologicalReaction>
</comment>
<comment type="catalytic activity">
    <reaction evidence="2">
        <text>taurodeoxycholate(in) + ATP + H2O = taurodeoxycholate(out) + ADP + phosphate + H(+)</text>
        <dbReference type="Rhea" id="RHEA:50080"/>
        <dbReference type="ChEBI" id="CHEBI:15377"/>
        <dbReference type="ChEBI" id="CHEBI:15378"/>
        <dbReference type="ChEBI" id="CHEBI:30616"/>
        <dbReference type="ChEBI" id="CHEBI:36261"/>
        <dbReference type="ChEBI" id="CHEBI:43474"/>
        <dbReference type="ChEBI" id="CHEBI:456216"/>
    </reaction>
    <physiologicalReaction direction="left-to-right" evidence="2">
        <dbReference type="Rhea" id="RHEA:50081"/>
    </physiologicalReaction>
</comment>
<comment type="catalytic activity">
    <reaction evidence="2">
        <text>taurolithocholate 3-sulfate(in) + ATP + H2O = taurolithocholate 3-sulfate(out) + ADP + phosphate + H(+)</text>
        <dbReference type="Rhea" id="RHEA:50084"/>
        <dbReference type="ChEBI" id="CHEBI:15377"/>
        <dbReference type="ChEBI" id="CHEBI:15378"/>
        <dbReference type="ChEBI" id="CHEBI:30616"/>
        <dbReference type="ChEBI" id="CHEBI:43474"/>
        <dbReference type="ChEBI" id="CHEBI:58301"/>
        <dbReference type="ChEBI" id="CHEBI:456216"/>
    </reaction>
    <physiologicalReaction direction="left-to-right" evidence="2">
        <dbReference type="Rhea" id="RHEA:50085"/>
    </physiologicalReaction>
</comment>
<comment type="catalytic activity">
    <reaction evidence="2">
        <text>pravastatin(in) + ATP + H2O = pravastatin(out) + ADP + phosphate + H(+)</text>
        <dbReference type="Rhea" id="RHEA:63908"/>
        <dbReference type="ChEBI" id="CHEBI:15377"/>
        <dbReference type="ChEBI" id="CHEBI:15378"/>
        <dbReference type="ChEBI" id="CHEBI:30616"/>
        <dbReference type="ChEBI" id="CHEBI:43474"/>
        <dbReference type="ChEBI" id="CHEBI:63660"/>
        <dbReference type="ChEBI" id="CHEBI:456216"/>
    </reaction>
    <physiologicalReaction direction="left-to-right" evidence="2">
        <dbReference type="Rhea" id="RHEA:63909"/>
    </physiologicalReaction>
</comment>
<comment type="activity regulation">
    <text evidence="2 7">The uptake of taurocholate is inhibited by taurolithocholate sulfate with an IC(50) of 9 uM. Pravastatin competitively inhibits the transport of taurocholic acid (PubMed:18985798). Cyclosporin A, glibenclamide, rifampicin and troglitazonestrongly competitively inhibit the transport activity of taurocholate (PubMed:18985798). The canalicular transport activity of taurocholate is strongly dependent on canalicular membrane cholesterol content. The uptake of taurocholate is increased by short- and medium-chain fatty acids. Cholesterol increases transport capacity of taurocholate without affecting the affinity for the substrate (By similarity).</text>
</comment>
<comment type="biophysicochemical properties">
    <kinetics>
        <KM evidence="7">33.7 uM for taurocholate</KM>
        <Vmax evidence="7">219.0 pmol/min/mg enzyme for taurocholate transport</Vmax>
    </kinetics>
</comment>
<comment type="subunit">
    <text evidence="1 2">Interacts with HAX1 (By similarity). Interacts with the adapter protein complex 2 (AP-2) throught AP2A2 or AP2A1; this interaction regulates cell membrane expression of ABCB11 through its internalization in a clathrin-dependent manner and its subsequent degradation (By similarity).</text>
</comment>
<comment type="subcellular location">
    <subcellularLocation>
        <location evidence="1">Apical cell membrane</location>
        <topology evidence="1">Multi-pass membrane protein</topology>
    </subcellularLocation>
    <subcellularLocation>
        <location evidence="1">Recycling endosome membrane</location>
        <topology evidence="1">Multi-pass membrane protein</topology>
    </subcellularLocation>
    <subcellularLocation>
        <location evidence="1">Endosome</location>
    </subcellularLocation>
    <subcellularLocation>
        <location evidence="1">Cell membrane</location>
        <topology evidence="1">Multi-pass membrane protein</topology>
    </subcellularLocation>
    <text evidence="1 2">Internalized at the canalicular membrane through interaction with the adapter protein complex 2 (AP-2). At steady state, localizes in the canalicular membrane but is also present in recycling endosomes. ABCB11 constantly and rapidly exchanges between the two sites through tubulo-vesicles carriers that move along microtubules. Microtubule-dependent trafficking of ABCB11 is enhanced by taurocholate and cAMP and regulated by STK11 through a PKA-mediated pathway. Trafficking of newly synthesized ABCB11 through endosomal compartment to the bile canalicular membrane is accelerated by cAMP but not by taurocholate (By similarity). Cell membrane expression is up-regulated by short- and medium-chain fatty acids (By similarity).</text>
</comment>
<comment type="tissue specificity">
    <text evidence="7">Liver.</text>
</comment>
<comment type="PTM">
    <text evidence="2">N-glycosylated.</text>
</comment>
<comment type="PTM">
    <text evidence="2">Ubiquitinated; short-chain ubiquitination regulates cell-Surface expression of ABCB11.</text>
</comment>
<comment type="similarity">
    <text evidence="9">Belongs to the ABC transporter superfamily. ABCB family. Multidrug resistance exporter (TC 3.A.1.201) subfamily.</text>
</comment>
<organism>
    <name type="scientific">Canis lupus familiaris</name>
    <name type="common">Dog</name>
    <name type="synonym">Canis familiaris</name>
    <dbReference type="NCBI Taxonomy" id="9615"/>
    <lineage>
        <taxon>Eukaryota</taxon>
        <taxon>Metazoa</taxon>
        <taxon>Chordata</taxon>
        <taxon>Craniata</taxon>
        <taxon>Vertebrata</taxon>
        <taxon>Euteleostomi</taxon>
        <taxon>Mammalia</taxon>
        <taxon>Eutheria</taxon>
        <taxon>Laurasiatheria</taxon>
        <taxon>Carnivora</taxon>
        <taxon>Caniformia</taxon>
        <taxon>Canidae</taxon>
        <taxon>Canis</taxon>
    </lineage>
</organism>
<gene>
    <name evidence="2" type="primary">Abcb11e</name>
    <name evidence="8" type="synonym">BSEP</name>
</gene>
<name>ABCBB_CANLF</name>
<accession>B8K1W2</accession>